<reference key="1">
    <citation type="journal article" date="2006" name="J. Bacteriol.">
        <title>Genome sequence of Aeromonas hydrophila ATCC 7966T: jack of all trades.</title>
        <authorList>
            <person name="Seshadri R."/>
            <person name="Joseph S.W."/>
            <person name="Chopra A.K."/>
            <person name="Sha J."/>
            <person name="Shaw J."/>
            <person name="Graf J."/>
            <person name="Haft D.H."/>
            <person name="Wu M."/>
            <person name="Ren Q."/>
            <person name="Rosovitz M.J."/>
            <person name="Madupu R."/>
            <person name="Tallon L."/>
            <person name="Kim M."/>
            <person name="Jin S."/>
            <person name="Vuong H."/>
            <person name="Stine O.C."/>
            <person name="Ali A."/>
            <person name="Horneman A.J."/>
            <person name="Heidelberg J.F."/>
        </authorList>
    </citation>
    <scope>NUCLEOTIDE SEQUENCE [LARGE SCALE GENOMIC DNA]</scope>
    <source>
        <strain>ATCC 7966 / DSM 30187 / BCRC 13018 / CCUG 14551 / JCM 1027 / KCTC 2358 / NCIMB 9240 / NCTC 8049</strain>
    </source>
</reference>
<feature type="chain" id="PRO_1000061751" description="Ribosomal RNA large subunit methyltransferase H">
    <location>
        <begin position="1"/>
        <end position="155"/>
    </location>
</feature>
<feature type="binding site" evidence="1">
    <location>
        <position position="72"/>
    </location>
    <ligand>
        <name>S-adenosyl-L-methionine</name>
        <dbReference type="ChEBI" id="CHEBI:59789"/>
    </ligand>
</feature>
<feature type="binding site" evidence="1">
    <location>
        <position position="103"/>
    </location>
    <ligand>
        <name>S-adenosyl-L-methionine</name>
        <dbReference type="ChEBI" id="CHEBI:59789"/>
    </ligand>
</feature>
<feature type="binding site" evidence="1">
    <location>
        <begin position="122"/>
        <end position="127"/>
    </location>
    <ligand>
        <name>S-adenosyl-L-methionine</name>
        <dbReference type="ChEBI" id="CHEBI:59789"/>
    </ligand>
</feature>
<protein>
    <recommendedName>
        <fullName evidence="1">Ribosomal RNA large subunit methyltransferase H</fullName>
        <ecNumber evidence="1">2.1.1.177</ecNumber>
    </recommendedName>
    <alternativeName>
        <fullName evidence="1">23S rRNA (pseudouridine1915-N3)-methyltransferase</fullName>
    </alternativeName>
    <alternativeName>
        <fullName evidence="1">23S rRNA m3Psi1915 methyltransferase</fullName>
    </alternativeName>
    <alternativeName>
        <fullName evidence="1">rRNA (pseudouridine-N3-)-methyltransferase RlmH</fullName>
    </alternativeName>
</protein>
<accession>A0KN93</accession>
<gene>
    <name evidence="1" type="primary">rlmH</name>
    <name type="ordered locus">AHA_3253</name>
</gene>
<name>RLMH_AERHH</name>
<organism>
    <name type="scientific">Aeromonas hydrophila subsp. hydrophila (strain ATCC 7966 / DSM 30187 / BCRC 13018 / CCUG 14551 / JCM 1027 / KCTC 2358 / NCIMB 9240 / NCTC 8049)</name>
    <dbReference type="NCBI Taxonomy" id="380703"/>
    <lineage>
        <taxon>Bacteria</taxon>
        <taxon>Pseudomonadati</taxon>
        <taxon>Pseudomonadota</taxon>
        <taxon>Gammaproteobacteria</taxon>
        <taxon>Aeromonadales</taxon>
        <taxon>Aeromonadaceae</taxon>
        <taxon>Aeromonas</taxon>
    </lineage>
</organism>
<keyword id="KW-0963">Cytoplasm</keyword>
<keyword id="KW-0489">Methyltransferase</keyword>
<keyword id="KW-1185">Reference proteome</keyword>
<keyword id="KW-0698">rRNA processing</keyword>
<keyword id="KW-0949">S-adenosyl-L-methionine</keyword>
<keyword id="KW-0808">Transferase</keyword>
<dbReference type="EC" id="2.1.1.177" evidence="1"/>
<dbReference type="EMBL" id="CP000462">
    <property type="protein sequence ID" value="ABK37546.1"/>
    <property type="molecule type" value="Genomic_DNA"/>
</dbReference>
<dbReference type="RefSeq" id="WP_005298242.1">
    <property type="nucleotide sequence ID" value="NC_008570.1"/>
</dbReference>
<dbReference type="RefSeq" id="YP_857744.1">
    <property type="nucleotide sequence ID" value="NC_008570.1"/>
</dbReference>
<dbReference type="SMR" id="A0KN93"/>
<dbReference type="STRING" id="380703.AHA_3253"/>
<dbReference type="EnsemblBacteria" id="ABK37546">
    <property type="protein sequence ID" value="ABK37546"/>
    <property type="gene ID" value="AHA_3253"/>
</dbReference>
<dbReference type="GeneID" id="48823464"/>
<dbReference type="KEGG" id="aha:AHA_3253"/>
<dbReference type="PATRIC" id="fig|380703.7.peg.3248"/>
<dbReference type="eggNOG" id="COG1576">
    <property type="taxonomic scope" value="Bacteria"/>
</dbReference>
<dbReference type="HOGENOM" id="CLU_100552_1_0_6"/>
<dbReference type="OrthoDB" id="9806643at2"/>
<dbReference type="PRO" id="PR:A0KN93"/>
<dbReference type="Proteomes" id="UP000000756">
    <property type="component" value="Chromosome"/>
</dbReference>
<dbReference type="GO" id="GO:0005737">
    <property type="term" value="C:cytoplasm"/>
    <property type="evidence" value="ECO:0007669"/>
    <property type="project" value="UniProtKB-SubCell"/>
</dbReference>
<dbReference type="GO" id="GO:0070038">
    <property type="term" value="F:rRNA (pseudouridine-N3-)-methyltransferase activity"/>
    <property type="evidence" value="ECO:0007669"/>
    <property type="project" value="UniProtKB-UniRule"/>
</dbReference>
<dbReference type="CDD" id="cd18081">
    <property type="entry name" value="RlmH-like"/>
    <property type="match status" value="1"/>
</dbReference>
<dbReference type="Gene3D" id="3.40.1280.10">
    <property type="match status" value="1"/>
</dbReference>
<dbReference type="HAMAP" id="MF_00658">
    <property type="entry name" value="23SrRNA_methyltr_H"/>
    <property type="match status" value="1"/>
</dbReference>
<dbReference type="InterPro" id="IPR029028">
    <property type="entry name" value="Alpha/beta_knot_MTases"/>
</dbReference>
<dbReference type="InterPro" id="IPR003742">
    <property type="entry name" value="RlmH-like"/>
</dbReference>
<dbReference type="InterPro" id="IPR029026">
    <property type="entry name" value="tRNA_m1G_MTases_N"/>
</dbReference>
<dbReference type="NCBIfam" id="NF000984">
    <property type="entry name" value="PRK00103.1-1"/>
    <property type="match status" value="1"/>
</dbReference>
<dbReference type="NCBIfam" id="NF000986">
    <property type="entry name" value="PRK00103.1-4"/>
    <property type="match status" value="1"/>
</dbReference>
<dbReference type="NCBIfam" id="TIGR00246">
    <property type="entry name" value="tRNA_RlmH_YbeA"/>
    <property type="match status" value="1"/>
</dbReference>
<dbReference type="PANTHER" id="PTHR33603">
    <property type="entry name" value="METHYLTRANSFERASE"/>
    <property type="match status" value="1"/>
</dbReference>
<dbReference type="PANTHER" id="PTHR33603:SF1">
    <property type="entry name" value="RIBOSOMAL RNA LARGE SUBUNIT METHYLTRANSFERASE H"/>
    <property type="match status" value="1"/>
</dbReference>
<dbReference type="Pfam" id="PF02590">
    <property type="entry name" value="SPOUT_MTase"/>
    <property type="match status" value="1"/>
</dbReference>
<dbReference type="PIRSF" id="PIRSF004505">
    <property type="entry name" value="MT_bac"/>
    <property type="match status" value="1"/>
</dbReference>
<dbReference type="SUPFAM" id="SSF75217">
    <property type="entry name" value="alpha/beta knot"/>
    <property type="match status" value="1"/>
</dbReference>
<proteinExistence type="inferred from homology"/>
<comment type="function">
    <text evidence="1">Specifically methylates the pseudouridine at position 1915 (m3Psi1915) in 23S rRNA.</text>
</comment>
<comment type="catalytic activity">
    <reaction evidence="1">
        <text>pseudouridine(1915) in 23S rRNA + S-adenosyl-L-methionine = N(3)-methylpseudouridine(1915) in 23S rRNA + S-adenosyl-L-homocysteine + H(+)</text>
        <dbReference type="Rhea" id="RHEA:42752"/>
        <dbReference type="Rhea" id="RHEA-COMP:10221"/>
        <dbReference type="Rhea" id="RHEA-COMP:10222"/>
        <dbReference type="ChEBI" id="CHEBI:15378"/>
        <dbReference type="ChEBI" id="CHEBI:57856"/>
        <dbReference type="ChEBI" id="CHEBI:59789"/>
        <dbReference type="ChEBI" id="CHEBI:65314"/>
        <dbReference type="ChEBI" id="CHEBI:74486"/>
        <dbReference type="EC" id="2.1.1.177"/>
    </reaction>
</comment>
<comment type="subunit">
    <text evidence="1">Homodimer.</text>
</comment>
<comment type="subcellular location">
    <subcellularLocation>
        <location evidence="1">Cytoplasm</location>
    </subcellularLocation>
</comment>
<comment type="similarity">
    <text evidence="1">Belongs to the RNA methyltransferase RlmH family.</text>
</comment>
<sequence length="155" mass="17305">MKIQLIAVGTKMPAWVEHGFEEYRRRFPKDMPFELVEIGAGKRGKNADIPRILQKEGEAMLAAAGRSRIVTLDIPGKPWTTEQLAVQLEAWKLDGRDVALLVGGPEGLSPECKAAAEQSWSLSPLTLPHPLVRVLVAESLYRAWSITTNHPYHRE</sequence>
<evidence type="ECO:0000255" key="1">
    <source>
        <dbReference type="HAMAP-Rule" id="MF_00658"/>
    </source>
</evidence>